<accession>Q0A2Q8</accession>
<dbReference type="EMBL" id="CY015023">
    <property type="protein sequence ID" value="ABI85023.1"/>
    <property type="molecule type" value="Genomic_RNA"/>
</dbReference>
<dbReference type="SMR" id="Q0A2Q8"/>
<dbReference type="GO" id="GO:0030430">
    <property type="term" value="C:host cell cytoplasm"/>
    <property type="evidence" value="ECO:0007669"/>
    <property type="project" value="UniProtKB-SubCell"/>
</dbReference>
<dbReference type="GO" id="GO:0042025">
    <property type="term" value="C:host cell nucleus"/>
    <property type="evidence" value="ECO:0007669"/>
    <property type="project" value="UniProtKB-SubCell"/>
</dbReference>
<dbReference type="GO" id="GO:0030291">
    <property type="term" value="F:protein serine/threonine kinase inhibitor activity"/>
    <property type="evidence" value="ECO:0007669"/>
    <property type="project" value="UniProtKB-KW"/>
</dbReference>
<dbReference type="GO" id="GO:0003723">
    <property type="term" value="F:RNA binding"/>
    <property type="evidence" value="ECO:0007669"/>
    <property type="project" value="UniProtKB-KW"/>
</dbReference>
<dbReference type="GO" id="GO:0039540">
    <property type="term" value="P:symbiont-mediated suppression of host cytoplasmic pattern recognition receptor signaling pathway via inhibition of RIG-I activity"/>
    <property type="evidence" value="ECO:0007669"/>
    <property type="project" value="UniProtKB-KW"/>
</dbReference>
<dbReference type="GO" id="GO:0039657">
    <property type="term" value="P:symbiont-mediated suppression of host gene expression"/>
    <property type="evidence" value="ECO:0007669"/>
    <property type="project" value="UniProtKB-KW"/>
</dbReference>
<dbReference type="GO" id="GO:0039524">
    <property type="term" value="P:symbiont-mediated suppression of host mRNA processing"/>
    <property type="evidence" value="ECO:0007669"/>
    <property type="project" value="UniProtKB-KW"/>
</dbReference>
<dbReference type="GO" id="GO:0039580">
    <property type="term" value="P:symbiont-mediated suppression of host PKR/eIFalpha signaling"/>
    <property type="evidence" value="ECO:0007669"/>
    <property type="project" value="UniProtKB-KW"/>
</dbReference>
<dbReference type="GO" id="GO:0039502">
    <property type="term" value="P:symbiont-mediated suppression of host type I interferon-mediated signaling pathway"/>
    <property type="evidence" value="ECO:0007669"/>
    <property type="project" value="UniProtKB-KW"/>
</dbReference>
<dbReference type="FunFam" id="1.10.287.10:FF:000001">
    <property type="entry name" value="Non-structural protein 1"/>
    <property type="match status" value="1"/>
</dbReference>
<dbReference type="FunFam" id="3.30.420.330:FF:000001">
    <property type="entry name" value="Non-structural protein 1"/>
    <property type="match status" value="1"/>
</dbReference>
<dbReference type="Gene3D" id="3.30.420.330">
    <property type="entry name" value="Influenza virus non-structural protein, effector domain"/>
    <property type="match status" value="1"/>
</dbReference>
<dbReference type="Gene3D" id="1.10.287.10">
    <property type="entry name" value="S15/NS1, RNA-binding"/>
    <property type="match status" value="1"/>
</dbReference>
<dbReference type="HAMAP" id="MF_04066">
    <property type="entry name" value="INFV_NS1"/>
    <property type="match status" value="1"/>
</dbReference>
<dbReference type="InterPro" id="IPR004208">
    <property type="entry name" value="NS1"/>
</dbReference>
<dbReference type="InterPro" id="IPR000256">
    <property type="entry name" value="NS1A"/>
</dbReference>
<dbReference type="InterPro" id="IPR038064">
    <property type="entry name" value="NS1A_effect_dom-like_sf"/>
</dbReference>
<dbReference type="InterPro" id="IPR009068">
    <property type="entry name" value="uS15_NS1_RNA-bd_sf"/>
</dbReference>
<dbReference type="Pfam" id="PF00600">
    <property type="entry name" value="Flu_NS1"/>
    <property type="match status" value="1"/>
</dbReference>
<dbReference type="SUPFAM" id="SSF143021">
    <property type="entry name" value="Ns1 effector domain-like"/>
    <property type="match status" value="1"/>
</dbReference>
<dbReference type="SUPFAM" id="SSF47060">
    <property type="entry name" value="S15/NS1 RNA-binding domain"/>
    <property type="match status" value="1"/>
</dbReference>
<gene>
    <name evidence="1" type="primary">NS</name>
</gene>
<sequence>MDSNTVSSFQVDCFLWHVRKRFADQELGDAPFLDRLRRDQKSLRGRGSTLGLDIETATRAGKQIVERILEEESDEALKMTIASVPASRYLTDMTLEEMSRDWFMLMPKQKVAGSLCIRMDQAIMDKNIILKANFSVIFDRLETLILLRAFTEEGAIVGEISPLPSLPGHTDEDVKNAIGVLIGGLEWNDNTVRVSETLQRFTWRSSNEDGRPPLPPKQKRKMARTIESEV</sequence>
<feature type="chain" id="PRO_0000324275" description="Non-structural protein 1">
    <location>
        <begin position="1"/>
        <end position="230"/>
    </location>
</feature>
<feature type="region of interest" description="RNA-binding and homodimerization" evidence="1">
    <location>
        <begin position="1"/>
        <end position="73"/>
    </location>
</feature>
<feature type="region of interest" description="CPSF4-binding" evidence="1">
    <location>
        <begin position="180"/>
        <end position="215"/>
    </location>
</feature>
<feature type="region of interest" description="Disordered" evidence="2">
    <location>
        <begin position="204"/>
        <end position="230"/>
    </location>
</feature>
<feature type="region of interest" description="PABPN1-binding" evidence="1">
    <location>
        <begin position="223"/>
        <end position="230"/>
    </location>
</feature>
<feature type="short sequence motif" description="Nuclear localization signal" evidence="1">
    <location>
        <begin position="34"/>
        <end position="38"/>
    </location>
</feature>
<feature type="short sequence motif" description="Nuclear export signal" evidence="1">
    <location>
        <begin position="137"/>
        <end position="146"/>
    </location>
</feature>
<name>NS1_I85A3</name>
<comment type="function">
    <text evidence="1">Inhibits post-transcriptional processing of cellular pre-mRNA, by binding and inhibiting two cellular proteins that are required for the 3'-end processing of cellular pre-mRNAs: the 30 kDa cleavage and polyadenylation specificity factor/CPSF4 and the poly(A)-binding protein 2/PABPN1. In turn, unprocessed 3' end pre-mRNAs accumulate in the host nucleus and are no longer exported to the cytoplasm. Cellular protein synthesis is thereby shut off very early after virus infection. Viral protein synthesis is not affected by the inhibition of the cellular 3' end processing machinery because the poly(A) tails of viral mRNAs are produced by the viral polymerase through a stuttering mechanism. Prevents the establishment of the cellular antiviral state by inhibiting TRIM25-mediated RIGI ubiquitination, which normally triggers the antiviral transduction signal that leads to the activation of type I IFN genes by transcription factors IRF3 and IRF7. Also binds poly(A) and U6 snRNA. Inhibits the integrated stress response (ISR) in the infected cell by blocking dsRNA binding by EIF2AK2/PKR and further phosphorylation of EIF2S1/EIF-2ALPHA. Stress granule formation is thus inhibited, which allows protein synthesis and viral replication.</text>
</comment>
<comment type="subunit">
    <text evidence="1">Homodimer. Interacts with host TRIM25 (via coiled coil); this interaction specifically inhibits TRIM25 multimerization and TRIM25-mediated RIGI CARD ubiquitination. Interacts with human EIF2AK2/PKR, CPSF4, IVNS1ABP and PABPN1.</text>
</comment>
<comment type="subcellular location">
    <subcellularLocation>
        <location evidence="1">Host nucleus</location>
    </subcellularLocation>
    <subcellularLocation>
        <location evidence="1">Host cytoplasm</location>
    </subcellularLocation>
    <text evidence="1">In uninfected, transfected cells, NS1 is localized in the nucleus. Only in virus infected cells, the nuclear export signal is unveiled, presumably by a viral protein, and a fraction of NS1 is exported in the cytoplasm.</text>
</comment>
<comment type="alternative products">
    <event type="alternative splicing"/>
    <isoform>
        <id>Q0A2Q8-1</id>
        <name>NS1</name>
        <sequence type="displayed"/>
    </isoform>
    <isoform>
        <id>Q0A2Q9-1</id>
        <name>NEP</name>
        <name>NS2</name>
        <sequence type="external"/>
    </isoform>
</comment>
<comment type="domain">
    <text evidence="1">The dsRNA-binding region is required for suppression of RNA silencing.</text>
</comment>
<comment type="PTM">
    <text evidence="1">Upon interferon induction, ISGylated via host HERC5; this results in the impairment of NS1 interaction with RNA targets due to its inability to form homodimers and to interact with host EIF2AK2/PKR.</text>
</comment>
<comment type="similarity">
    <text evidence="1">Belongs to the influenza A viruses NS1 family.</text>
</comment>
<organism>
    <name type="scientific">Influenza A virus (strain A/Chicken/Victoria/1/1985 H7N7)</name>
    <dbReference type="NCBI Taxonomy" id="402520"/>
    <lineage>
        <taxon>Viruses</taxon>
        <taxon>Riboviria</taxon>
        <taxon>Orthornavirae</taxon>
        <taxon>Negarnaviricota</taxon>
        <taxon>Polyploviricotina</taxon>
        <taxon>Insthoviricetes</taxon>
        <taxon>Articulavirales</taxon>
        <taxon>Orthomyxoviridae</taxon>
        <taxon>Alphainfluenzavirus</taxon>
        <taxon>Alphainfluenzavirus influenzae</taxon>
        <taxon>Influenza A virus</taxon>
    </lineage>
</organism>
<keyword id="KW-0025">Alternative splicing</keyword>
<keyword id="KW-1262">Eukaryotic host gene expression shutoff by virus</keyword>
<keyword id="KW-1035">Host cytoplasm</keyword>
<keyword id="KW-1190">Host gene expression shutoff by virus</keyword>
<keyword id="KW-1192">Host mRNA suppression by virus</keyword>
<keyword id="KW-1048">Host nucleus</keyword>
<keyword id="KW-0945">Host-virus interaction</keyword>
<keyword id="KW-1090">Inhibition of host innate immune response by virus</keyword>
<keyword id="KW-1114">Inhibition of host interferon signaling pathway by virus</keyword>
<keyword id="KW-1102">Inhibition of host PKR by virus</keyword>
<keyword id="KW-1103">Inhibition of host pre-mRNA processing by virus</keyword>
<keyword id="KW-1088">Inhibition of host RIG-I by virus</keyword>
<keyword id="KW-1113">Inhibition of host RLR pathway by virus</keyword>
<keyword id="KW-0922">Interferon antiviral system evasion</keyword>
<keyword id="KW-0694">RNA-binding</keyword>
<keyword id="KW-0832">Ubl conjugation</keyword>
<keyword id="KW-0899">Viral immunoevasion</keyword>
<proteinExistence type="inferred from homology"/>
<organismHost>
    <name type="scientific">Aves</name>
    <dbReference type="NCBI Taxonomy" id="8782"/>
</organismHost>
<organismHost>
    <name type="scientific">Equus caballus</name>
    <name type="common">Horse</name>
    <dbReference type="NCBI Taxonomy" id="9796"/>
</organismHost>
<organismHost>
    <name type="scientific">Homo sapiens</name>
    <name type="common">Human</name>
    <dbReference type="NCBI Taxonomy" id="9606"/>
</organismHost>
<organismHost>
    <name type="scientific">Phocidae</name>
    <name type="common">true seals</name>
    <dbReference type="NCBI Taxonomy" id="9709"/>
</organismHost>
<reference key="1">
    <citation type="journal article" date="2006" name="Science">
        <title>Large-scale sequence analysis of avian influenza isolates.</title>
        <authorList>
            <person name="Obenauer J.C."/>
            <person name="Denson J."/>
            <person name="Mehta P.K."/>
            <person name="Su X."/>
            <person name="Mukatira S."/>
            <person name="Finkelstein D.B."/>
            <person name="Xu X."/>
            <person name="Wang J."/>
            <person name="Ma J."/>
            <person name="Fan Y."/>
            <person name="Rakestraw K.M."/>
            <person name="Webster R.G."/>
            <person name="Hoffmann E."/>
            <person name="Krauss S."/>
            <person name="Zheng J."/>
            <person name="Zhang Z."/>
            <person name="Naeve C.W."/>
        </authorList>
    </citation>
    <scope>NUCLEOTIDE SEQUENCE [GENOMIC RNA]</scope>
</reference>
<evidence type="ECO:0000255" key="1">
    <source>
        <dbReference type="HAMAP-Rule" id="MF_04066"/>
    </source>
</evidence>
<evidence type="ECO:0000256" key="2">
    <source>
        <dbReference type="SAM" id="MobiDB-lite"/>
    </source>
</evidence>
<protein>
    <recommendedName>
        <fullName evidence="1">Non-structural protein 1</fullName>
        <shortName evidence="1">NS1</shortName>
    </recommendedName>
    <alternativeName>
        <fullName evidence="1">NS1A</fullName>
    </alternativeName>
</protein>